<sequence>MNSYWLNVYKPRGISSAKLVSIIKKVLGKVKIGHSGTLDVEAEGVLPLAIGEATKLVQMLIDAKKTYIFTVKFGKQTDSGDYAGKVIAITDYIPSKENAYAICSKFIGTITQIPPAFSALKVNGVRAYKLARDGKEVELKPRNITIYDLKCLNYDEQNATATYYAECSKGTYIRTLAEDLALSLQSLGFVIELRRTQVGIFKEENSIRIDSFNDITKLSLEEKNIKIEAILDDILVLDANDEQAQKIKYGQKCLFDYDKNVDFMWVRYKGVLLAIGSLNKNCFHSLRVFNLTQ</sequence>
<evidence type="ECO:0000255" key="1">
    <source>
        <dbReference type="HAMAP-Rule" id="MF_01080"/>
    </source>
</evidence>
<reference key="1">
    <citation type="submission" date="2007-09" db="EMBL/GenBank/DDBJ databases">
        <title>Complete genome sequencing of Rickettsia bellii.</title>
        <authorList>
            <person name="Madan A."/>
            <person name="Lee H."/>
            <person name="Madan A."/>
            <person name="Yoon J.-G."/>
            <person name="Ryu G.-Y."/>
            <person name="Dasch G."/>
            <person name="Ereemeva M."/>
        </authorList>
    </citation>
    <scope>NUCLEOTIDE SEQUENCE [LARGE SCALE GENOMIC DNA]</scope>
    <source>
        <strain>OSU 85-389</strain>
    </source>
</reference>
<feature type="chain" id="PRO_1000084660" description="tRNA pseudouridine synthase B">
    <location>
        <begin position="1"/>
        <end position="293"/>
    </location>
</feature>
<feature type="active site" description="Nucleophile" evidence="1">
    <location>
        <position position="39"/>
    </location>
</feature>
<dbReference type="EC" id="5.4.99.25" evidence="1"/>
<dbReference type="EMBL" id="CP000849">
    <property type="protein sequence ID" value="ABV79327.1"/>
    <property type="molecule type" value="Genomic_DNA"/>
</dbReference>
<dbReference type="RefSeq" id="WP_012151977.1">
    <property type="nucleotide sequence ID" value="NC_009883.1"/>
</dbReference>
<dbReference type="SMR" id="A8GWV0"/>
<dbReference type="KEGG" id="rbo:A1I_04970"/>
<dbReference type="HOGENOM" id="CLU_032087_0_3_5"/>
<dbReference type="GO" id="GO:0003723">
    <property type="term" value="F:RNA binding"/>
    <property type="evidence" value="ECO:0007669"/>
    <property type="project" value="InterPro"/>
</dbReference>
<dbReference type="GO" id="GO:0160148">
    <property type="term" value="F:tRNA pseudouridine(55) synthase activity"/>
    <property type="evidence" value="ECO:0007669"/>
    <property type="project" value="UniProtKB-EC"/>
</dbReference>
<dbReference type="GO" id="GO:1990481">
    <property type="term" value="P:mRNA pseudouridine synthesis"/>
    <property type="evidence" value="ECO:0007669"/>
    <property type="project" value="TreeGrafter"/>
</dbReference>
<dbReference type="GO" id="GO:0031119">
    <property type="term" value="P:tRNA pseudouridine synthesis"/>
    <property type="evidence" value="ECO:0007669"/>
    <property type="project" value="UniProtKB-UniRule"/>
</dbReference>
<dbReference type="CDD" id="cd02573">
    <property type="entry name" value="PseudoU_synth_EcTruB"/>
    <property type="match status" value="1"/>
</dbReference>
<dbReference type="Gene3D" id="3.30.2350.10">
    <property type="entry name" value="Pseudouridine synthase"/>
    <property type="match status" value="1"/>
</dbReference>
<dbReference type="HAMAP" id="MF_01080">
    <property type="entry name" value="TruB_bact"/>
    <property type="match status" value="1"/>
</dbReference>
<dbReference type="InterPro" id="IPR020103">
    <property type="entry name" value="PsdUridine_synth_cat_dom_sf"/>
</dbReference>
<dbReference type="InterPro" id="IPR002501">
    <property type="entry name" value="PsdUridine_synth_N"/>
</dbReference>
<dbReference type="InterPro" id="IPR014780">
    <property type="entry name" value="tRNA_psdUridine_synth_TruB"/>
</dbReference>
<dbReference type="InterPro" id="IPR032819">
    <property type="entry name" value="TruB_C"/>
</dbReference>
<dbReference type="NCBIfam" id="TIGR00431">
    <property type="entry name" value="TruB"/>
    <property type="match status" value="1"/>
</dbReference>
<dbReference type="PANTHER" id="PTHR13767:SF2">
    <property type="entry name" value="PSEUDOURIDYLATE SYNTHASE TRUB1"/>
    <property type="match status" value="1"/>
</dbReference>
<dbReference type="PANTHER" id="PTHR13767">
    <property type="entry name" value="TRNA-PSEUDOURIDINE SYNTHASE"/>
    <property type="match status" value="1"/>
</dbReference>
<dbReference type="Pfam" id="PF16198">
    <property type="entry name" value="TruB_C_2"/>
    <property type="match status" value="1"/>
</dbReference>
<dbReference type="Pfam" id="PF01509">
    <property type="entry name" value="TruB_N"/>
    <property type="match status" value="1"/>
</dbReference>
<dbReference type="SUPFAM" id="SSF55120">
    <property type="entry name" value="Pseudouridine synthase"/>
    <property type="match status" value="1"/>
</dbReference>
<accession>A8GWV0</accession>
<protein>
    <recommendedName>
        <fullName evidence="1">tRNA pseudouridine synthase B</fullName>
        <ecNumber evidence="1">5.4.99.25</ecNumber>
    </recommendedName>
    <alternativeName>
        <fullName evidence="1">tRNA pseudouridine(55) synthase</fullName>
        <shortName evidence="1">Psi55 synthase</shortName>
    </alternativeName>
    <alternativeName>
        <fullName evidence="1">tRNA pseudouridylate synthase</fullName>
    </alternativeName>
    <alternativeName>
        <fullName evidence="1">tRNA-uridine isomerase</fullName>
    </alternativeName>
</protein>
<name>TRUB_RICB8</name>
<comment type="function">
    <text evidence="1">Responsible for synthesis of pseudouridine from uracil-55 in the psi GC loop of transfer RNAs.</text>
</comment>
<comment type="catalytic activity">
    <reaction evidence="1">
        <text>uridine(55) in tRNA = pseudouridine(55) in tRNA</text>
        <dbReference type="Rhea" id="RHEA:42532"/>
        <dbReference type="Rhea" id="RHEA-COMP:10101"/>
        <dbReference type="Rhea" id="RHEA-COMP:10102"/>
        <dbReference type="ChEBI" id="CHEBI:65314"/>
        <dbReference type="ChEBI" id="CHEBI:65315"/>
        <dbReference type="EC" id="5.4.99.25"/>
    </reaction>
</comment>
<comment type="similarity">
    <text evidence="1">Belongs to the pseudouridine synthase TruB family. Type 1 subfamily.</text>
</comment>
<proteinExistence type="inferred from homology"/>
<organism>
    <name type="scientific">Rickettsia bellii (strain OSU 85-389)</name>
    <dbReference type="NCBI Taxonomy" id="391896"/>
    <lineage>
        <taxon>Bacteria</taxon>
        <taxon>Pseudomonadati</taxon>
        <taxon>Pseudomonadota</taxon>
        <taxon>Alphaproteobacteria</taxon>
        <taxon>Rickettsiales</taxon>
        <taxon>Rickettsiaceae</taxon>
        <taxon>Rickettsieae</taxon>
        <taxon>Rickettsia</taxon>
        <taxon>belli group</taxon>
    </lineage>
</organism>
<keyword id="KW-0413">Isomerase</keyword>
<keyword id="KW-0819">tRNA processing</keyword>
<gene>
    <name evidence="1" type="primary">truB</name>
    <name type="ordered locus">A1I_04970</name>
</gene>